<name>HPRK_BORA1</name>
<gene>
    <name evidence="1" type="primary">hprK</name>
    <name type="ordered locus">BAV3157</name>
</gene>
<protein>
    <recommendedName>
        <fullName evidence="1">HPr kinase/phosphorylase</fullName>
        <shortName evidence="1">HPrK/P</shortName>
        <ecNumber evidence="1">2.7.11.-</ecNumber>
        <ecNumber evidence="1">2.7.4.-</ecNumber>
    </recommendedName>
    <alternativeName>
        <fullName evidence="1">HPr(Ser) kinase/phosphorylase</fullName>
    </alternativeName>
</protein>
<comment type="function">
    <text evidence="1">Catalyzes the ATP- as well as the pyrophosphate-dependent phosphorylation of a specific serine residue in HPr, a phosphocarrier protein of the phosphoenolpyruvate-dependent sugar phosphotransferase system (PTS). HprK/P also catalyzes the pyrophosphate-producing, inorganic phosphate-dependent dephosphorylation (phosphorolysis) of seryl-phosphorylated HPr (P-Ser-HPr).</text>
</comment>
<comment type="catalytic activity">
    <reaction evidence="1">
        <text>[HPr protein]-L-serine + ATP = [HPr protein]-O-phospho-L-serine + ADP + H(+)</text>
        <dbReference type="Rhea" id="RHEA:46600"/>
        <dbReference type="Rhea" id="RHEA-COMP:11602"/>
        <dbReference type="Rhea" id="RHEA-COMP:11603"/>
        <dbReference type="ChEBI" id="CHEBI:15378"/>
        <dbReference type="ChEBI" id="CHEBI:29999"/>
        <dbReference type="ChEBI" id="CHEBI:30616"/>
        <dbReference type="ChEBI" id="CHEBI:83421"/>
        <dbReference type="ChEBI" id="CHEBI:456216"/>
    </reaction>
</comment>
<comment type="catalytic activity">
    <reaction evidence="1">
        <text>[HPr protein]-O-phospho-L-serine + phosphate + H(+) = [HPr protein]-L-serine + diphosphate</text>
        <dbReference type="Rhea" id="RHEA:46604"/>
        <dbReference type="Rhea" id="RHEA-COMP:11602"/>
        <dbReference type="Rhea" id="RHEA-COMP:11603"/>
        <dbReference type="ChEBI" id="CHEBI:15378"/>
        <dbReference type="ChEBI" id="CHEBI:29999"/>
        <dbReference type="ChEBI" id="CHEBI:33019"/>
        <dbReference type="ChEBI" id="CHEBI:43474"/>
        <dbReference type="ChEBI" id="CHEBI:83421"/>
    </reaction>
</comment>
<comment type="cofactor">
    <cofactor evidence="1">
        <name>Mg(2+)</name>
        <dbReference type="ChEBI" id="CHEBI:18420"/>
    </cofactor>
</comment>
<comment type="subunit">
    <text evidence="1">Homohexamer.</text>
</comment>
<comment type="domain">
    <text evidence="1">The Walker A ATP-binding motif also binds Pi and PPi.</text>
</comment>
<comment type="miscellaneous">
    <text evidence="1">Both phosphorylation and phosphorolysis are carried out by the same active site and suggest a common mechanism for both reactions.</text>
</comment>
<comment type="similarity">
    <text evidence="1">Belongs to the HPrK/P family.</text>
</comment>
<proteinExistence type="inferred from homology"/>
<dbReference type="EC" id="2.7.11.-" evidence="1"/>
<dbReference type="EC" id="2.7.4.-" evidence="1"/>
<dbReference type="EMBL" id="AM167904">
    <property type="protein sequence ID" value="CAJ50767.1"/>
    <property type="molecule type" value="Genomic_DNA"/>
</dbReference>
<dbReference type="RefSeq" id="WP_012418795.1">
    <property type="nucleotide sequence ID" value="NC_010645.1"/>
</dbReference>
<dbReference type="SMR" id="Q2KU93"/>
<dbReference type="STRING" id="360910.BAV3157"/>
<dbReference type="GeneID" id="92933586"/>
<dbReference type="KEGG" id="bav:BAV3157"/>
<dbReference type="eggNOG" id="COG1493">
    <property type="taxonomic scope" value="Bacteria"/>
</dbReference>
<dbReference type="HOGENOM" id="CLU_052030_0_2_4"/>
<dbReference type="OrthoDB" id="9778803at2"/>
<dbReference type="Proteomes" id="UP000001977">
    <property type="component" value="Chromosome"/>
</dbReference>
<dbReference type="GO" id="GO:0005524">
    <property type="term" value="F:ATP binding"/>
    <property type="evidence" value="ECO:0007669"/>
    <property type="project" value="UniProtKB-UniRule"/>
</dbReference>
<dbReference type="GO" id="GO:0000287">
    <property type="term" value="F:magnesium ion binding"/>
    <property type="evidence" value="ECO:0007669"/>
    <property type="project" value="UniProtKB-UniRule"/>
</dbReference>
<dbReference type="GO" id="GO:0000155">
    <property type="term" value="F:phosphorelay sensor kinase activity"/>
    <property type="evidence" value="ECO:0007669"/>
    <property type="project" value="InterPro"/>
</dbReference>
<dbReference type="GO" id="GO:0004674">
    <property type="term" value="F:protein serine/threonine kinase activity"/>
    <property type="evidence" value="ECO:0007669"/>
    <property type="project" value="UniProtKB-KW"/>
</dbReference>
<dbReference type="GO" id="GO:0004712">
    <property type="term" value="F:protein serine/threonine/tyrosine kinase activity"/>
    <property type="evidence" value="ECO:0007669"/>
    <property type="project" value="UniProtKB-UniRule"/>
</dbReference>
<dbReference type="GO" id="GO:0006109">
    <property type="term" value="P:regulation of carbohydrate metabolic process"/>
    <property type="evidence" value="ECO:0007669"/>
    <property type="project" value="UniProtKB-UniRule"/>
</dbReference>
<dbReference type="CDD" id="cd01918">
    <property type="entry name" value="HprK_C"/>
    <property type="match status" value="1"/>
</dbReference>
<dbReference type="FunFam" id="3.40.50.300:FF:000174">
    <property type="entry name" value="HPr kinase/phosphorylase"/>
    <property type="match status" value="1"/>
</dbReference>
<dbReference type="Gene3D" id="3.40.1390.20">
    <property type="entry name" value="HprK N-terminal domain-like"/>
    <property type="match status" value="1"/>
</dbReference>
<dbReference type="Gene3D" id="3.40.50.300">
    <property type="entry name" value="P-loop containing nucleotide triphosphate hydrolases"/>
    <property type="match status" value="1"/>
</dbReference>
<dbReference type="HAMAP" id="MF_01249">
    <property type="entry name" value="HPr_kinase"/>
    <property type="match status" value="1"/>
</dbReference>
<dbReference type="InterPro" id="IPR003755">
    <property type="entry name" value="HPr(Ser)_kin/Pase"/>
</dbReference>
<dbReference type="InterPro" id="IPR011104">
    <property type="entry name" value="Hpr_kin/Pase_C"/>
</dbReference>
<dbReference type="InterPro" id="IPR011126">
    <property type="entry name" value="Hpr_kin/Pase_Hpr_N"/>
</dbReference>
<dbReference type="InterPro" id="IPR027417">
    <property type="entry name" value="P-loop_NTPase"/>
</dbReference>
<dbReference type="InterPro" id="IPR028979">
    <property type="entry name" value="Ser_kin/Pase_Hpr-like_N_sf"/>
</dbReference>
<dbReference type="NCBIfam" id="TIGR00679">
    <property type="entry name" value="hpr-ser"/>
    <property type="match status" value="1"/>
</dbReference>
<dbReference type="PANTHER" id="PTHR30305:SF1">
    <property type="entry name" value="HPR KINASE_PHOSPHORYLASE"/>
    <property type="match status" value="1"/>
</dbReference>
<dbReference type="PANTHER" id="PTHR30305">
    <property type="entry name" value="PROTEIN YJDM-RELATED"/>
    <property type="match status" value="1"/>
</dbReference>
<dbReference type="Pfam" id="PF07475">
    <property type="entry name" value="Hpr_kinase_C"/>
    <property type="match status" value="1"/>
</dbReference>
<dbReference type="Pfam" id="PF02603">
    <property type="entry name" value="Hpr_kinase_N"/>
    <property type="match status" value="1"/>
</dbReference>
<dbReference type="SUPFAM" id="SSF75138">
    <property type="entry name" value="HprK N-terminal domain-like"/>
    <property type="match status" value="1"/>
</dbReference>
<dbReference type="SUPFAM" id="SSF53795">
    <property type="entry name" value="PEP carboxykinase-like"/>
    <property type="match status" value="1"/>
</dbReference>
<evidence type="ECO:0000255" key="1">
    <source>
        <dbReference type="HAMAP-Rule" id="MF_01249"/>
    </source>
</evidence>
<accession>Q2KU93</accession>
<feature type="chain" id="PRO_1000067126" description="HPr kinase/phosphorylase">
    <location>
        <begin position="1"/>
        <end position="308"/>
    </location>
</feature>
<feature type="region of interest" description="Important for the catalytic mechanism of both phosphorylation and dephosphorylation" evidence="1">
    <location>
        <begin position="201"/>
        <end position="210"/>
    </location>
</feature>
<feature type="region of interest" description="Important for the catalytic mechanism of dephosphorylation" evidence="1">
    <location>
        <begin position="264"/>
        <end position="269"/>
    </location>
</feature>
<feature type="active site" evidence="1">
    <location>
        <position position="138"/>
    </location>
</feature>
<feature type="active site" evidence="1">
    <location>
        <position position="159"/>
    </location>
</feature>
<feature type="active site" description="Proton acceptor; for phosphorylation activity. Proton donor; for dephosphorylation activity" evidence="1">
    <location>
        <position position="177"/>
    </location>
</feature>
<feature type="active site" evidence="1">
    <location>
        <position position="243"/>
    </location>
</feature>
<feature type="binding site" evidence="1">
    <location>
        <begin position="153"/>
        <end position="160"/>
    </location>
    <ligand>
        <name>ATP</name>
        <dbReference type="ChEBI" id="CHEBI:30616"/>
    </ligand>
</feature>
<feature type="binding site" evidence="1">
    <location>
        <position position="160"/>
    </location>
    <ligand>
        <name>Mg(2+)</name>
        <dbReference type="ChEBI" id="CHEBI:18420"/>
    </ligand>
</feature>
<feature type="binding site" evidence="1">
    <location>
        <position position="202"/>
    </location>
    <ligand>
        <name>Mg(2+)</name>
        <dbReference type="ChEBI" id="CHEBI:18420"/>
    </ligand>
</feature>
<keyword id="KW-0067">ATP-binding</keyword>
<keyword id="KW-0418">Kinase</keyword>
<keyword id="KW-0460">Magnesium</keyword>
<keyword id="KW-0479">Metal-binding</keyword>
<keyword id="KW-0511">Multifunctional enzyme</keyword>
<keyword id="KW-0547">Nucleotide-binding</keyword>
<keyword id="KW-1185">Reference proteome</keyword>
<keyword id="KW-0723">Serine/threonine-protein kinase</keyword>
<keyword id="KW-0808">Transferase</keyword>
<organism>
    <name type="scientific">Bordetella avium (strain 197N)</name>
    <dbReference type="NCBI Taxonomy" id="360910"/>
    <lineage>
        <taxon>Bacteria</taxon>
        <taxon>Pseudomonadati</taxon>
        <taxon>Pseudomonadota</taxon>
        <taxon>Betaproteobacteria</taxon>
        <taxon>Burkholderiales</taxon>
        <taxon>Alcaligenaceae</taxon>
        <taxon>Bordetella</taxon>
    </lineage>
</organism>
<reference key="1">
    <citation type="journal article" date="2006" name="J. Bacteriol.">
        <title>Comparison of the genome sequence of the poultry pathogen Bordetella avium with those of B. bronchiseptica, B. pertussis, and B. parapertussis reveals extensive diversity in surface structures associated with host interaction.</title>
        <authorList>
            <person name="Sebaihia M."/>
            <person name="Preston A."/>
            <person name="Maskell D.J."/>
            <person name="Kuzmiak H."/>
            <person name="Connell T.D."/>
            <person name="King N.D."/>
            <person name="Orndorff P.E."/>
            <person name="Miyamoto D.M."/>
            <person name="Thomson N.R."/>
            <person name="Harris D."/>
            <person name="Goble A."/>
            <person name="Lord A."/>
            <person name="Murphy L."/>
            <person name="Quail M.A."/>
            <person name="Rutter S."/>
            <person name="Squares R."/>
            <person name="Squares S."/>
            <person name="Woodward J."/>
            <person name="Parkhill J."/>
            <person name="Temple L.M."/>
        </authorList>
    </citation>
    <scope>NUCLEOTIDE SEQUENCE [LARGE SCALE GENOMIC DNA]</scope>
    <source>
        <strain>197N</strain>
    </source>
</reference>
<sequence length="308" mass="33752">MLTVQELVDDNADNIPFNWIAGHGAADRAIPDDGMAAADLVGHLNLIHPSRVQVFGQEELAYYTRFDLRRRMHHMDELLIGGVPAILLADGLSAPQDLIDQCDQHQVPLLSTPVAAAQLIDLLRIYLGKKLAPTTTVHGVFLDVLGLGVLITGESGLGKSELALELISRGHGLVADDAVEFSRTAPNMIEGHCPQLLQNLLEVRGLGLLDIRTIFGETSVRRKMRLKLIVHLVRATAQDKFERLPLQDITQDMLGLPVRKVMLQVAAGRNLAVLVEAAVRNTILKLRGIDTLGEFMERQAMAILQSSK</sequence>